<accession>O13286</accession>
<accession>A7VJ97</accession>
<name>SRW1_SCHPO</name>
<gene>
    <name type="primary">srw1</name>
    <name type="synonym">ste9</name>
    <name type="ORF">SPAC144.13c</name>
</gene>
<keyword id="KW-0131">Cell cycle</keyword>
<keyword id="KW-0539">Nucleus</keyword>
<keyword id="KW-0597">Phosphoprotein</keyword>
<keyword id="KW-1185">Reference proteome</keyword>
<keyword id="KW-0677">Repeat</keyword>
<keyword id="KW-0853">WD repeat</keyword>
<comment type="function">
    <text evidence="2 5 6 7">Has a role in cell differentiation and cell cycling by negatively regulating cig2 and cdc12-associated cdc2. Down-regulates the level of cdc13, particularly in a nitrogen deprived environment. Regulator of cell cycle G1 phase progression. Prevents onset of mitosis during the pre-Start G1 period. Required for degradation of cdc13 mitotic cyclin B during G1 arrest but not during mitotic exit.</text>
</comment>
<comment type="subcellular location">
    <subcellularLocation>
        <location evidence="3">Nucleus</location>
    </subcellularLocation>
</comment>
<comment type="PTM">
    <text evidence="2 4">Phosphorylated by cdc2-cdc13-CDK complex. This targets srw1 for proteolysis which in turn promotes cdc13 turnover. Dephosphorylated during G1 arrest.</text>
</comment>
<comment type="similarity">
    <text evidence="8">Belongs to the WD repeat CDC20/Fizzy family.</text>
</comment>
<proteinExistence type="evidence at protein level"/>
<reference key="1">
    <citation type="journal article" date="1997" name="Mol. Biol. Cell">
        <title>A WD repeat protein controls the cell cycle and differentiation by negatively regulating Cdc2/B-type cyclin complexes.</title>
        <authorList>
            <person name="Yamaguchi S."/>
            <person name="Murakami H."/>
            <person name="Okayama H."/>
        </authorList>
    </citation>
    <scope>NUCLEOTIDE SEQUENCE [MRNA]</scope>
    <scope>FUNCTION</scope>
</reference>
<reference key="2">
    <citation type="journal article" date="1998" name="Mol. Biol. Cell">
        <title>Fission yeast ste9, a homolog of hct1/cdh1 and Fizzy-related, is a novel negative regulator of cell cycle progression during G1-phase.</title>
        <authorList>
            <person name="Kitamura K."/>
            <person name="Maekawa H."/>
            <person name="Shimoda C."/>
        </authorList>
    </citation>
    <scope>NUCLEOTIDE SEQUENCE [GENOMIC DNA]</scope>
    <scope>FUNCTION</scope>
</reference>
<reference key="3">
    <citation type="journal article" date="2002" name="Nature">
        <title>The genome sequence of Schizosaccharomyces pombe.</title>
        <authorList>
            <person name="Wood V."/>
            <person name="Gwilliam R."/>
            <person name="Rajandream M.A."/>
            <person name="Lyne M.H."/>
            <person name="Lyne R."/>
            <person name="Stewart A."/>
            <person name="Sgouros J.G."/>
            <person name="Peat N."/>
            <person name="Hayles J."/>
            <person name="Baker S.G."/>
            <person name="Basham D."/>
            <person name="Bowman S."/>
            <person name="Brooks K."/>
            <person name="Brown D."/>
            <person name="Brown S."/>
            <person name="Chillingworth T."/>
            <person name="Churcher C.M."/>
            <person name="Collins M."/>
            <person name="Connor R."/>
            <person name="Cronin A."/>
            <person name="Davis P."/>
            <person name="Feltwell T."/>
            <person name="Fraser A."/>
            <person name="Gentles S."/>
            <person name="Goble A."/>
            <person name="Hamlin N."/>
            <person name="Harris D.E."/>
            <person name="Hidalgo J."/>
            <person name="Hodgson G."/>
            <person name="Holroyd S."/>
            <person name="Hornsby T."/>
            <person name="Howarth S."/>
            <person name="Huckle E.J."/>
            <person name="Hunt S."/>
            <person name="Jagels K."/>
            <person name="James K.D."/>
            <person name="Jones L."/>
            <person name="Jones M."/>
            <person name="Leather S."/>
            <person name="McDonald S."/>
            <person name="McLean J."/>
            <person name="Mooney P."/>
            <person name="Moule S."/>
            <person name="Mungall K.L."/>
            <person name="Murphy L.D."/>
            <person name="Niblett D."/>
            <person name="Odell C."/>
            <person name="Oliver K."/>
            <person name="O'Neil S."/>
            <person name="Pearson D."/>
            <person name="Quail M.A."/>
            <person name="Rabbinowitsch E."/>
            <person name="Rutherford K.M."/>
            <person name="Rutter S."/>
            <person name="Saunders D."/>
            <person name="Seeger K."/>
            <person name="Sharp S."/>
            <person name="Skelton J."/>
            <person name="Simmonds M.N."/>
            <person name="Squares R."/>
            <person name="Squares S."/>
            <person name="Stevens K."/>
            <person name="Taylor K."/>
            <person name="Taylor R.G."/>
            <person name="Tivey A."/>
            <person name="Walsh S.V."/>
            <person name="Warren T."/>
            <person name="Whitehead S."/>
            <person name="Woodward J.R."/>
            <person name="Volckaert G."/>
            <person name="Aert R."/>
            <person name="Robben J."/>
            <person name="Grymonprez B."/>
            <person name="Weltjens I."/>
            <person name="Vanstreels E."/>
            <person name="Rieger M."/>
            <person name="Schaefer M."/>
            <person name="Mueller-Auer S."/>
            <person name="Gabel C."/>
            <person name="Fuchs M."/>
            <person name="Duesterhoeft A."/>
            <person name="Fritzc C."/>
            <person name="Holzer E."/>
            <person name="Moestl D."/>
            <person name="Hilbert H."/>
            <person name="Borzym K."/>
            <person name="Langer I."/>
            <person name="Beck A."/>
            <person name="Lehrach H."/>
            <person name="Reinhardt R."/>
            <person name="Pohl T.M."/>
            <person name="Eger P."/>
            <person name="Zimmermann W."/>
            <person name="Wedler H."/>
            <person name="Wambutt R."/>
            <person name="Purnelle B."/>
            <person name="Goffeau A."/>
            <person name="Cadieu E."/>
            <person name="Dreano S."/>
            <person name="Gloux S."/>
            <person name="Lelaure V."/>
            <person name="Mottier S."/>
            <person name="Galibert F."/>
            <person name="Aves S.J."/>
            <person name="Xiang Z."/>
            <person name="Hunt C."/>
            <person name="Moore K."/>
            <person name="Hurst S.M."/>
            <person name="Lucas M."/>
            <person name="Rochet M."/>
            <person name="Gaillardin C."/>
            <person name="Tallada V.A."/>
            <person name="Garzon A."/>
            <person name="Thode G."/>
            <person name="Daga R.R."/>
            <person name="Cruzado L."/>
            <person name="Jimenez J."/>
            <person name="Sanchez M."/>
            <person name="del Rey F."/>
            <person name="Benito J."/>
            <person name="Dominguez A."/>
            <person name="Revuelta J.L."/>
            <person name="Moreno S."/>
            <person name="Armstrong J."/>
            <person name="Forsburg S.L."/>
            <person name="Cerutti L."/>
            <person name="Lowe T."/>
            <person name="McCombie W.R."/>
            <person name="Paulsen I."/>
            <person name="Potashkin J."/>
            <person name="Shpakovski G.V."/>
            <person name="Ussery D."/>
            <person name="Barrell B.G."/>
            <person name="Nurse P."/>
        </authorList>
    </citation>
    <scope>NUCLEOTIDE SEQUENCE [LARGE SCALE GENOMIC DNA]</scope>
    <source>
        <strain>972 / ATCC 24843</strain>
    </source>
</reference>
<reference key="4">
    <citation type="journal article" date="1998" name="EMBO J.">
        <title>Apc10 and Ste9/Srw1, two regulators of the APC-cyclosome, as well as the CDK inhibitor Rum1 are required for G1 cell-cycle arrest in fission yeast.</title>
        <authorList>
            <person name="Kominami K."/>
            <person name="Seth-Smith H."/>
            <person name="Toda T."/>
        </authorList>
    </citation>
    <scope>FUNCTION</scope>
</reference>
<reference key="5">
    <citation type="journal article" date="2000" name="EMBO J.">
        <title>Fission yeast Fizzy-related protein srw1p is a G(1)-specific promoter of mitotic cyclin B degradation.</title>
        <authorList>
            <person name="Yamaguchi S."/>
            <person name="Okayama H."/>
            <person name="Nurse P."/>
        </authorList>
    </citation>
    <scope>FUNCTION</scope>
    <scope>PHOSPHORYLATION AT SER-62; THR-98; THR-177 AND SER-214</scope>
    <scope>MUTAGENESIS OF SER-62; THR-98; THR-177 AND SER-214</scope>
</reference>
<reference key="6">
    <citation type="journal article" date="2006" name="Nat. Biotechnol.">
        <title>ORFeome cloning and global analysis of protein localization in the fission yeast Schizosaccharomyces pombe.</title>
        <authorList>
            <person name="Matsuyama A."/>
            <person name="Arai R."/>
            <person name="Yashiroda Y."/>
            <person name="Shirai A."/>
            <person name="Kamata A."/>
            <person name="Sekido S."/>
            <person name="Kobayashi Y."/>
            <person name="Hashimoto A."/>
            <person name="Hamamoto M."/>
            <person name="Hiraoka Y."/>
            <person name="Horinouchi S."/>
            <person name="Yoshida M."/>
        </authorList>
    </citation>
    <scope>SUBCELLULAR LOCATION [LARGE SCALE ANALYSIS]</scope>
</reference>
<reference key="7">
    <citation type="journal article" date="2008" name="J. Proteome Res.">
        <title>Phosphoproteome analysis of fission yeast.</title>
        <authorList>
            <person name="Wilson-Grady J.T."/>
            <person name="Villen J."/>
            <person name="Gygi S.P."/>
        </authorList>
    </citation>
    <scope>PHOSPHORYLATION [LARGE SCALE ANALYSIS] AT SER-187</scope>
    <scope>IDENTIFICATION BY MASS SPECTROMETRY</scope>
</reference>
<sequence length="556" mass="62060">MDEFDGFTRPTSSNSSANRNSNNSMNRVENNNSNSDSANTVDSRGDAHTRMRQGFEKSFPSSPNKKRPRTNEGDRFIPSRDASTELWTGFTKVEGPLTPVKKKQSVADRNFTTLLRSELFGSNDETFNNSPIATPNTTIGVSTPRTDSGIDDIELTQRTPPSSSHTSSSILQNTPVTPSRKIFHYLSPRDRNKSSYGKKAQYQDNPNRTIYSLSPVRSITKDLISASRLEGRELPSIPYRVLDAPGLAGDFYLNLLDWGQCNMLAVALASRVYLWSGISSEVTVMHNFYPTDTVTSLRWVQRGTHLAVGTHNGSVEIWDAATCKKTRTMSGHTERVGALSWNDHVLSSGGRDNHILHRDVRAPEHYFRVLTAHRQEVCGLEWNSNENLLASGGNDNALMVWDKFEEKPLYSFHNHIAAVKAITWSPHQRGILASGGGTADRTIKLWNTQRGSMLHNIDTGSQVCNLLWSKQTNEFISTHGFMENEVALWNYPSVSRVGTLKGHTDRVLYLAMSPNGENIVTGAADETLRFWKLFDSKSKHSASTMSSPFDPTMKIR</sequence>
<protein>
    <recommendedName>
        <fullName>WD repeat-containing protein srw1</fullName>
    </recommendedName>
    <alternativeName>
        <fullName>Suppressor of rad/wee1</fullName>
    </alternativeName>
</protein>
<dbReference type="EMBL" id="AB005589">
    <property type="protein sequence ID" value="BAA22152.1"/>
    <property type="molecule type" value="mRNA"/>
</dbReference>
<dbReference type="EMBL" id="AB001285">
    <property type="protein sequence ID" value="BAF76646.1"/>
    <property type="molecule type" value="Genomic_DNA"/>
</dbReference>
<dbReference type="EMBL" id="CU329670">
    <property type="protein sequence ID" value="CAB59693.1"/>
    <property type="molecule type" value="Genomic_DNA"/>
</dbReference>
<dbReference type="PIR" id="T37680">
    <property type="entry name" value="T37680"/>
</dbReference>
<dbReference type="RefSeq" id="NP_594674.1">
    <property type="nucleotide sequence ID" value="NM_001020103.2"/>
</dbReference>
<dbReference type="SMR" id="O13286"/>
<dbReference type="BioGRID" id="279271">
    <property type="interactions" value="24"/>
</dbReference>
<dbReference type="ComplexPortal" id="CPX-765">
    <property type="entry name" value="Anaphase-promoting complex, srw1 variant"/>
</dbReference>
<dbReference type="ELM" id="O13286"/>
<dbReference type="FunCoup" id="O13286">
    <property type="interactions" value="211"/>
</dbReference>
<dbReference type="STRING" id="284812.O13286"/>
<dbReference type="iPTMnet" id="O13286"/>
<dbReference type="PaxDb" id="4896-SPAC144.13c.1"/>
<dbReference type="EnsemblFungi" id="SPAC144.13c.1">
    <property type="protein sequence ID" value="SPAC144.13c.1:pep"/>
    <property type="gene ID" value="SPAC144.13c"/>
</dbReference>
<dbReference type="GeneID" id="2542824"/>
<dbReference type="KEGG" id="spo:2542824"/>
<dbReference type="PomBase" id="SPAC144.13c">
    <property type="gene designation" value="srw1"/>
</dbReference>
<dbReference type="VEuPathDB" id="FungiDB:SPAC144.13c"/>
<dbReference type="eggNOG" id="KOG0305">
    <property type="taxonomic scope" value="Eukaryota"/>
</dbReference>
<dbReference type="HOGENOM" id="CLU_014831_4_1_1"/>
<dbReference type="InParanoid" id="O13286"/>
<dbReference type="OMA" id="WVQRGTH"/>
<dbReference type="PhylomeDB" id="O13286"/>
<dbReference type="Reactome" id="R-SPO-176407">
    <property type="pathway name" value="Conversion from APC/C:Cdc20 to APC/C:Cdh1 in late anaphase"/>
</dbReference>
<dbReference type="Reactome" id="R-SPO-69656">
    <property type="pathway name" value="Cyclin A:Cdk2-associated events at S phase entry"/>
</dbReference>
<dbReference type="Reactome" id="R-SPO-983168">
    <property type="pathway name" value="Antigen processing: Ubiquitination &amp; Proteasome degradation"/>
</dbReference>
<dbReference type="PRO" id="PR:O13286"/>
<dbReference type="Proteomes" id="UP000002485">
    <property type="component" value="Chromosome I"/>
</dbReference>
<dbReference type="GO" id="GO:0005634">
    <property type="term" value="C:nucleus"/>
    <property type="evidence" value="ECO:0007005"/>
    <property type="project" value="PomBase"/>
</dbReference>
<dbReference type="GO" id="GO:0010997">
    <property type="term" value="F:anaphase-promoting complex binding"/>
    <property type="evidence" value="ECO:0007669"/>
    <property type="project" value="InterPro"/>
</dbReference>
<dbReference type="GO" id="GO:1990757">
    <property type="term" value="F:ubiquitin ligase activator activity"/>
    <property type="evidence" value="ECO:0000314"/>
    <property type="project" value="PomBase"/>
</dbReference>
<dbReference type="GO" id="GO:0031145">
    <property type="term" value="P:anaphase-promoting complex-dependent catabolic process"/>
    <property type="evidence" value="ECO:0000314"/>
    <property type="project" value="PomBase"/>
</dbReference>
<dbReference type="GO" id="GO:0031568">
    <property type="term" value="P:mitotic G1 cell size control checkpoint signaling"/>
    <property type="evidence" value="ECO:0000315"/>
    <property type="project" value="PomBase"/>
</dbReference>
<dbReference type="GO" id="GO:2000134">
    <property type="term" value="P:negative regulation of G1/S transition of mitotic cell cycle"/>
    <property type="evidence" value="ECO:0000316"/>
    <property type="project" value="PomBase"/>
</dbReference>
<dbReference type="GO" id="GO:1905786">
    <property type="term" value="P:positive regulation of anaphase-promoting complex-dependent catabolic process"/>
    <property type="evidence" value="ECO:0000315"/>
    <property type="project" value="PomBase"/>
</dbReference>
<dbReference type="CDD" id="cd00200">
    <property type="entry name" value="WD40"/>
    <property type="match status" value="1"/>
</dbReference>
<dbReference type="Gene3D" id="2.130.10.10">
    <property type="entry name" value="YVTN repeat-like/Quinoprotein amine dehydrogenase"/>
    <property type="match status" value="1"/>
</dbReference>
<dbReference type="InterPro" id="IPR033010">
    <property type="entry name" value="Cdc20/Fizzy"/>
</dbReference>
<dbReference type="InterPro" id="IPR015943">
    <property type="entry name" value="WD40/YVTN_repeat-like_dom_sf"/>
</dbReference>
<dbReference type="InterPro" id="IPR056150">
    <property type="entry name" value="WD40_CDC20-Fz"/>
</dbReference>
<dbReference type="InterPro" id="IPR019775">
    <property type="entry name" value="WD40_repeat_CS"/>
</dbReference>
<dbReference type="InterPro" id="IPR036322">
    <property type="entry name" value="WD40_repeat_dom_sf"/>
</dbReference>
<dbReference type="InterPro" id="IPR001680">
    <property type="entry name" value="WD40_rpt"/>
</dbReference>
<dbReference type="PANTHER" id="PTHR19918">
    <property type="entry name" value="CELL DIVISION CYCLE 20 CDC20 FIZZY -RELATED"/>
    <property type="match status" value="1"/>
</dbReference>
<dbReference type="PANTHER" id="PTHR19918:SF1">
    <property type="entry name" value="FIZZY-RELATED PROTEIN HOMOLOG"/>
    <property type="match status" value="1"/>
</dbReference>
<dbReference type="Pfam" id="PF24807">
    <property type="entry name" value="WD40_CDC20-Fz"/>
    <property type="match status" value="1"/>
</dbReference>
<dbReference type="SMART" id="SM00320">
    <property type="entry name" value="WD40"/>
    <property type="match status" value="5"/>
</dbReference>
<dbReference type="SUPFAM" id="SSF50978">
    <property type="entry name" value="WD40 repeat-like"/>
    <property type="match status" value="1"/>
</dbReference>
<dbReference type="PROSITE" id="PS00678">
    <property type="entry name" value="WD_REPEATS_1"/>
    <property type="match status" value="1"/>
</dbReference>
<dbReference type="PROSITE" id="PS50082">
    <property type="entry name" value="WD_REPEATS_2"/>
    <property type="match status" value="4"/>
</dbReference>
<dbReference type="PROSITE" id="PS50294">
    <property type="entry name" value="WD_REPEATS_REGION"/>
    <property type="match status" value="1"/>
</dbReference>
<feature type="chain" id="PRO_0000051228" description="WD repeat-containing protein srw1">
    <location>
        <begin position="1"/>
        <end position="556"/>
    </location>
</feature>
<feature type="repeat" description="WD 1">
    <location>
        <begin position="246"/>
        <end position="285"/>
    </location>
</feature>
<feature type="repeat" description="WD 2">
    <location>
        <begin position="289"/>
        <end position="328"/>
    </location>
</feature>
<feature type="repeat" description="WD 3">
    <location>
        <begin position="331"/>
        <end position="368"/>
    </location>
</feature>
<feature type="repeat" description="WD 4">
    <location>
        <begin position="372"/>
        <end position="411"/>
    </location>
</feature>
<feature type="repeat" description="WD 5">
    <location>
        <begin position="414"/>
        <end position="456"/>
    </location>
</feature>
<feature type="repeat" description="WD 6">
    <location>
        <begin position="458"/>
        <end position="499"/>
    </location>
</feature>
<feature type="repeat" description="WD 7">
    <location>
        <begin position="502"/>
        <end position="541"/>
    </location>
</feature>
<feature type="region of interest" description="Disordered" evidence="1">
    <location>
        <begin position="1"/>
        <end position="80"/>
    </location>
</feature>
<feature type="region of interest" description="Disordered" evidence="1">
    <location>
        <begin position="126"/>
        <end position="173"/>
    </location>
</feature>
<feature type="compositionally biased region" description="Low complexity" evidence="1">
    <location>
        <begin position="12"/>
        <end position="37"/>
    </location>
</feature>
<feature type="compositionally biased region" description="Basic and acidic residues" evidence="1">
    <location>
        <begin position="43"/>
        <end position="55"/>
    </location>
</feature>
<feature type="compositionally biased region" description="Basic and acidic residues" evidence="1">
    <location>
        <begin position="69"/>
        <end position="78"/>
    </location>
</feature>
<feature type="compositionally biased region" description="Polar residues" evidence="1">
    <location>
        <begin position="126"/>
        <end position="146"/>
    </location>
</feature>
<feature type="compositionally biased region" description="Low complexity" evidence="1">
    <location>
        <begin position="159"/>
        <end position="169"/>
    </location>
</feature>
<feature type="modified residue" description="Phosphoserine" evidence="2">
    <location>
        <position position="62"/>
    </location>
</feature>
<feature type="modified residue" description="Phosphothreonine" evidence="2">
    <location>
        <position position="98"/>
    </location>
</feature>
<feature type="modified residue" description="Phosphothreonine" evidence="2">
    <location>
        <position position="177"/>
    </location>
</feature>
<feature type="modified residue" description="Phosphoserine" evidence="4">
    <location>
        <position position="187"/>
    </location>
</feature>
<feature type="modified residue" description="Phosphoserine" evidence="2">
    <location>
        <position position="214"/>
    </location>
</feature>
<feature type="mutagenesis site" description="Increased mobility on Western blot." evidence="2">
    <original>S</original>
    <variation>A</variation>
    <location>
        <position position="62"/>
    </location>
</feature>
<feature type="mutagenesis site" description="Increased mobility on Western blot." evidence="2">
    <original>T</original>
    <variation>A</variation>
    <location>
        <position position="98"/>
    </location>
</feature>
<feature type="mutagenesis site" description="Increased mobility on Western blot." evidence="2">
    <original>T</original>
    <variation>A</variation>
    <location>
        <position position="177"/>
    </location>
</feature>
<feature type="mutagenesis site" description="Increased mobility on Western blot." evidence="2">
    <original>S</original>
    <variation>A</variation>
    <location>
        <position position="214"/>
    </location>
</feature>
<organism>
    <name type="scientific">Schizosaccharomyces pombe (strain 972 / ATCC 24843)</name>
    <name type="common">Fission yeast</name>
    <dbReference type="NCBI Taxonomy" id="284812"/>
    <lineage>
        <taxon>Eukaryota</taxon>
        <taxon>Fungi</taxon>
        <taxon>Dikarya</taxon>
        <taxon>Ascomycota</taxon>
        <taxon>Taphrinomycotina</taxon>
        <taxon>Schizosaccharomycetes</taxon>
        <taxon>Schizosaccharomycetales</taxon>
        <taxon>Schizosaccharomycetaceae</taxon>
        <taxon>Schizosaccharomyces</taxon>
    </lineage>
</organism>
<evidence type="ECO:0000256" key="1">
    <source>
        <dbReference type="SAM" id="MobiDB-lite"/>
    </source>
</evidence>
<evidence type="ECO:0000269" key="2">
    <source>
    </source>
</evidence>
<evidence type="ECO:0000269" key="3">
    <source>
    </source>
</evidence>
<evidence type="ECO:0000269" key="4">
    <source>
    </source>
</evidence>
<evidence type="ECO:0000269" key="5">
    <source>
    </source>
</evidence>
<evidence type="ECO:0000269" key="6">
    <source>
    </source>
</evidence>
<evidence type="ECO:0000269" key="7">
    <source>
    </source>
</evidence>
<evidence type="ECO:0000305" key="8"/>